<reference key="1">
    <citation type="submission" date="2004-11" db="EMBL/GenBank/DDBJ databases">
        <authorList>
            <consortium name="The German cDNA consortium"/>
        </authorList>
    </citation>
    <scope>NUCLEOTIDE SEQUENCE [LARGE SCALE MRNA]</scope>
    <source>
        <tissue>Brain cortex</tissue>
    </source>
</reference>
<sequence>MGCTLSAEDKAAVERSKMIDRNLREDGEKAAREVKLLLLGAGESGKSTIVKQMKIIHEAGYSEEECKQYKAVVYSNTIQSIIAIIRAMGRLKIDFGDSARADDARQLFVLAGAAEEGFMTAELAGVIKRLWKDSGVQACFNRSREYQLNDSAAYYLNDLDRIAQPNYIPTQQDVLRTRVKTTGIVETHFTFKDLHFKMFDVGGQRSERKKWIHCFEGVTAIIFCVALSDYDLVLAEDEEMNRMHESMKLFDSTCNNKWFTDTSIILFLNKKDLFEEKIKKSPLTICYPEYAGSNTYEEAAAYIQCQFEDLNKRKDTKEIYTHFTCATDTKNVQFVFDAVTDVIIKNNLKDCGLF</sequence>
<accession>Q5RAD4</accession>
<protein>
    <recommendedName>
        <fullName>Guanine nucleotide-binding protein G(i) subunit alpha-1</fullName>
        <ecNumber evidence="2">3.6.5.-</ecNumber>
    </recommendedName>
    <alternativeName>
        <fullName>Adenylate cyclase-inhibiting G alpha protein</fullName>
    </alternativeName>
</protein>
<dbReference type="EC" id="3.6.5.-" evidence="2"/>
<dbReference type="EMBL" id="CR859084">
    <property type="protein sequence ID" value="CAH91276.1"/>
    <property type="molecule type" value="mRNA"/>
</dbReference>
<dbReference type="RefSeq" id="NP_001125754.1">
    <property type="nucleotide sequence ID" value="NM_001132282.1"/>
</dbReference>
<dbReference type="SMR" id="Q5RAD4"/>
<dbReference type="FunCoup" id="Q5RAD4">
    <property type="interactions" value="2989"/>
</dbReference>
<dbReference type="STRING" id="9601.ENSPPYP00000001241"/>
<dbReference type="GeneID" id="100172679"/>
<dbReference type="KEGG" id="pon:100172679"/>
<dbReference type="CTD" id="2770"/>
<dbReference type="eggNOG" id="KOG0082">
    <property type="taxonomic scope" value="Eukaryota"/>
</dbReference>
<dbReference type="InParanoid" id="Q5RAD4"/>
<dbReference type="OrthoDB" id="5817230at2759"/>
<dbReference type="Proteomes" id="UP000001595">
    <property type="component" value="Unplaced"/>
</dbReference>
<dbReference type="GO" id="GO:0005938">
    <property type="term" value="C:cell cortex"/>
    <property type="evidence" value="ECO:0000250"/>
    <property type="project" value="UniProtKB"/>
</dbReference>
<dbReference type="GO" id="GO:0005813">
    <property type="term" value="C:centrosome"/>
    <property type="evidence" value="ECO:0000250"/>
    <property type="project" value="UniProtKB"/>
</dbReference>
<dbReference type="GO" id="GO:0005737">
    <property type="term" value="C:cytoplasm"/>
    <property type="evidence" value="ECO:0000250"/>
    <property type="project" value="UniProtKB"/>
</dbReference>
<dbReference type="GO" id="GO:0005834">
    <property type="term" value="C:heterotrimeric G-protein complex"/>
    <property type="evidence" value="ECO:0007669"/>
    <property type="project" value="TreeGrafter"/>
</dbReference>
<dbReference type="GO" id="GO:0030496">
    <property type="term" value="C:midbody"/>
    <property type="evidence" value="ECO:0000250"/>
    <property type="project" value="UniProtKB"/>
</dbReference>
<dbReference type="GO" id="GO:0005634">
    <property type="term" value="C:nucleus"/>
    <property type="evidence" value="ECO:0007669"/>
    <property type="project" value="UniProtKB-SubCell"/>
</dbReference>
<dbReference type="GO" id="GO:0005886">
    <property type="term" value="C:plasma membrane"/>
    <property type="evidence" value="ECO:0000250"/>
    <property type="project" value="UniProtKB"/>
</dbReference>
<dbReference type="GO" id="GO:0001664">
    <property type="term" value="F:G protein-coupled receptor binding"/>
    <property type="evidence" value="ECO:0000250"/>
    <property type="project" value="UniProtKB"/>
</dbReference>
<dbReference type="GO" id="GO:0031821">
    <property type="term" value="F:G protein-coupled serotonin receptor binding"/>
    <property type="evidence" value="ECO:0007669"/>
    <property type="project" value="TreeGrafter"/>
</dbReference>
<dbReference type="GO" id="GO:0031683">
    <property type="term" value="F:G-protein beta/gamma-subunit complex binding"/>
    <property type="evidence" value="ECO:0007669"/>
    <property type="project" value="InterPro"/>
</dbReference>
<dbReference type="GO" id="GO:0019003">
    <property type="term" value="F:GDP binding"/>
    <property type="evidence" value="ECO:0000250"/>
    <property type="project" value="UniProtKB"/>
</dbReference>
<dbReference type="GO" id="GO:0005525">
    <property type="term" value="F:GTP binding"/>
    <property type="evidence" value="ECO:0000250"/>
    <property type="project" value="UniProtKB"/>
</dbReference>
<dbReference type="GO" id="GO:0003924">
    <property type="term" value="F:GTPase activity"/>
    <property type="evidence" value="ECO:0000250"/>
    <property type="project" value="UniProtKB"/>
</dbReference>
<dbReference type="GO" id="GO:0000287">
    <property type="term" value="F:magnesium ion binding"/>
    <property type="evidence" value="ECO:0000250"/>
    <property type="project" value="UniProtKB"/>
</dbReference>
<dbReference type="GO" id="GO:0007188">
    <property type="term" value="P:adenylate cyclase-modulating G protein-coupled receptor signaling pathway"/>
    <property type="evidence" value="ECO:0000250"/>
    <property type="project" value="UniProtKB"/>
</dbReference>
<dbReference type="GO" id="GO:0051301">
    <property type="term" value="P:cell division"/>
    <property type="evidence" value="ECO:0000250"/>
    <property type="project" value="UniProtKB"/>
</dbReference>
<dbReference type="GO" id="GO:1904322">
    <property type="term" value="P:cellular response to forskolin"/>
    <property type="evidence" value="ECO:0000250"/>
    <property type="project" value="UniProtKB"/>
</dbReference>
<dbReference type="GO" id="GO:0007186">
    <property type="term" value="P:G protein-coupled receptor signaling pathway"/>
    <property type="evidence" value="ECO:0000250"/>
    <property type="project" value="UniProtKB"/>
</dbReference>
<dbReference type="GO" id="GO:1904778">
    <property type="term" value="P:positive regulation of protein localization to cell cortex"/>
    <property type="evidence" value="ECO:0000250"/>
    <property type="project" value="UniProtKB"/>
</dbReference>
<dbReference type="GO" id="GO:0060236">
    <property type="term" value="P:regulation of mitotic spindle organization"/>
    <property type="evidence" value="ECO:0000250"/>
    <property type="project" value="UniProtKB"/>
</dbReference>
<dbReference type="CDD" id="cd00066">
    <property type="entry name" value="G-alpha"/>
    <property type="match status" value="1"/>
</dbReference>
<dbReference type="FunFam" id="1.10.400.10:FF:000001">
    <property type="entry name" value="Guanine nucleotide-binding protein G(I) subunit alpha"/>
    <property type="match status" value="1"/>
</dbReference>
<dbReference type="FunFam" id="3.40.50.300:FF:002487">
    <property type="entry name" value="Guanine nucleotide-binding protein G(i) subunit alpha-1"/>
    <property type="match status" value="1"/>
</dbReference>
<dbReference type="FunFam" id="3.40.50.300:FF:003559">
    <property type="entry name" value="Guanine nucleotide-binding protein G(i) subunit alpha-1"/>
    <property type="match status" value="1"/>
</dbReference>
<dbReference type="Gene3D" id="1.10.400.10">
    <property type="entry name" value="GI Alpha 1, domain 2-like"/>
    <property type="match status" value="1"/>
</dbReference>
<dbReference type="Gene3D" id="3.40.50.300">
    <property type="entry name" value="P-loop containing nucleotide triphosphate hydrolases"/>
    <property type="match status" value="1"/>
</dbReference>
<dbReference type="InterPro" id="IPR001408">
    <property type="entry name" value="Gprotein_alpha_I"/>
</dbReference>
<dbReference type="InterPro" id="IPR001019">
    <property type="entry name" value="Gprotein_alpha_su"/>
</dbReference>
<dbReference type="InterPro" id="IPR011025">
    <property type="entry name" value="GproteinA_insert"/>
</dbReference>
<dbReference type="InterPro" id="IPR027417">
    <property type="entry name" value="P-loop_NTPase"/>
</dbReference>
<dbReference type="PANTHER" id="PTHR10218">
    <property type="entry name" value="GTP-BINDING PROTEIN ALPHA SUBUNIT"/>
    <property type="match status" value="1"/>
</dbReference>
<dbReference type="PANTHER" id="PTHR10218:SF359">
    <property type="entry name" value="GUANINE NUCLEOTIDE-BINDING PROTEIN G(I) SUBUNIT ALPHA-1"/>
    <property type="match status" value="1"/>
</dbReference>
<dbReference type="Pfam" id="PF00503">
    <property type="entry name" value="G-alpha"/>
    <property type="match status" value="1"/>
</dbReference>
<dbReference type="PRINTS" id="PR00318">
    <property type="entry name" value="GPROTEINA"/>
</dbReference>
<dbReference type="PRINTS" id="PR00441">
    <property type="entry name" value="GPROTEINAI"/>
</dbReference>
<dbReference type="SMART" id="SM00275">
    <property type="entry name" value="G_alpha"/>
    <property type="match status" value="1"/>
</dbReference>
<dbReference type="SUPFAM" id="SSF52540">
    <property type="entry name" value="P-loop containing nucleoside triphosphate hydrolases"/>
    <property type="match status" value="1"/>
</dbReference>
<dbReference type="SUPFAM" id="SSF47895">
    <property type="entry name" value="Transducin (alpha subunit), insertion domain"/>
    <property type="match status" value="1"/>
</dbReference>
<dbReference type="PROSITE" id="PS51882">
    <property type="entry name" value="G_ALPHA"/>
    <property type="match status" value="1"/>
</dbReference>
<proteinExistence type="evidence at transcript level"/>
<name>GNAI1_PONAB</name>
<organism>
    <name type="scientific">Pongo abelii</name>
    <name type="common">Sumatran orangutan</name>
    <name type="synonym">Pongo pygmaeus abelii</name>
    <dbReference type="NCBI Taxonomy" id="9601"/>
    <lineage>
        <taxon>Eukaryota</taxon>
        <taxon>Metazoa</taxon>
        <taxon>Chordata</taxon>
        <taxon>Craniata</taxon>
        <taxon>Vertebrata</taxon>
        <taxon>Euteleostomi</taxon>
        <taxon>Mammalia</taxon>
        <taxon>Eutheria</taxon>
        <taxon>Euarchontoglires</taxon>
        <taxon>Primates</taxon>
        <taxon>Haplorrhini</taxon>
        <taxon>Catarrhini</taxon>
        <taxon>Hominidae</taxon>
        <taxon>Pongo</taxon>
    </lineage>
</organism>
<feature type="initiator methionine" description="Removed" evidence="2">
    <location>
        <position position="1"/>
    </location>
</feature>
<feature type="chain" id="PRO_0000203672" description="Guanine nucleotide-binding protein G(i) subunit alpha-1">
    <location>
        <begin position="2"/>
        <end position="354"/>
    </location>
</feature>
<feature type="domain" description="G-alpha" evidence="3">
    <location>
        <begin position="32"/>
        <end position="354"/>
    </location>
</feature>
<feature type="region of interest" description="G1 motif" evidence="3">
    <location>
        <begin position="35"/>
        <end position="48"/>
    </location>
</feature>
<feature type="region of interest" description="G2 motif" evidence="3">
    <location>
        <begin position="173"/>
        <end position="181"/>
    </location>
</feature>
<feature type="region of interest" description="G3 motif" evidence="3">
    <location>
        <begin position="196"/>
        <end position="205"/>
    </location>
</feature>
<feature type="region of interest" description="G4 motif" evidence="3">
    <location>
        <begin position="265"/>
        <end position="272"/>
    </location>
</feature>
<feature type="region of interest" description="G5 motif" evidence="3">
    <location>
        <begin position="324"/>
        <end position="329"/>
    </location>
</feature>
<feature type="binding site" evidence="1">
    <location>
        <begin position="43"/>
        <end position="48"/>
    </location>
    <ligand>
        <name>GTP</name>
        <dbReference type="ChEBI" id="CHEBI:37565"/>
    </ligand>
</feature>
<feature type="binding site" evidence="1">
    <location>
        <position position="47"/>
    </location>
    <ligand>
        <name>Mg(2+)</name>
        <dbReference type="ChEBI" id="CHEBI:18420"/>
    </ligand>
</feature>
<feature type="binding site" evidence="1">
    <location>
        <begin position="150"/>
        <end position="151"/>
    </location>
    <ligand>
        <name>GTP</name>
        <dbReference type="ChEBI" id="CHEBI:37565"/>
    </ligand>
</feature>
<feature type="binding site" evidence="1">
    <location>
        <begin position="175"/>
        <end position="178"/>
    </location>
    <ligand>
        <name>GTP</name>
        <dbReference type="ChEBI" id="CHEBI:37565"/>
    </ligand>
</feature>
<feature type="binding site" evidence="1">
    <location>
        <position position="181"/>
    </location>
    <ligand>
        <name>Mg(2+)</name>
        <dbReference type="ChEBI" id="CHEBI:18420"/>
    </ligand>
</feature>
<feature type="binding site" evidence="1">
    <location>
        <begin position="200"/>
        <end position="204"/>
    </location>
    <ligand>
        <name>GTP</name>
        <dbReference type="ChEBI" id="CHEBI:37565"/>
    </ligand>
</feature>
<feature type="binding site" evidence="1">
    <location>
        <begin position="269"/>
        <end position="272"/>
    </location>
    <ligand>
        <name>GTP</name>
        <dbReference type="ChEBI" id="CHEBI:37565"/>
    </ligand>
</feature>
<feature type="binding site" evidence="1">
    <location>
        <position position="326"/>
    </location>
    <ligand>
        <name>GTP</name>
        <dbReference type="ChEBI" id="CHEBI:37565"/>
    </ligand>
</feature>
<feature type="lipid moiety-binding region" description="N-myristoyl glycine" evidence="2">
    <location>
        <position position="2"/>
    </location>
</feature>
<feature type="lipid moiety-binding region" description="S-palmitoyl cysteine" evidence="1">
    <location>
        <position position="3"/>
    </location>
</feature>
<evidence type="ECO:0000250" key="1">
    <source>
        <dbReference type="UniProtKB" id="P10824"/>
    </source>
</evidence>
<evidence type="ECO:0000250" key="2">
    <source>
        <dbReference type="UniProtKB" id="P63096"/>
    </source>
</evidence>
<evidence type="ECO:0000255" key="3">
    <source>
        <dbReference type="PROSITE-ProRule" id="PRU01230"/>
    </source>
</evidence>
<evidence type="ECO:0000305" key="4"/>
<gene>
    <name type="primary">GNAI1</name>
</gene>
<comment type="function">
    <text evidence="1 2">Guanine nucleotide-binding proteins (G proteins) function as transducers downstream of G protein-coupled receptors (GPCRs) in numerous signaling cascades. The alpha chain contains the guanine nucleotide binding site and alternates between an active, GTP-bound state and an inactive, GDP-bound state. Signaling by an activated GPCR promotes GDP release and GTP binding. The alpha subunit has a low GTPase activity that converts bound GTP to GDP, thereby terminating the signal. Both GDP release and GTP hydrolysis are modulated by numerous regulatory proteins (By similarity). Signaling is mediated via effector proteins, such as adenylate cyclase. Inhibits adenylate cyclase activity of ADCY1, ADCY5 and ADCY6, leading to decreased intracellular cAMP levels (By similarity). The inactive GDP-bound form prevents the association of RGS14 with centrosomes and is required for the translocation of RGS14 from the cytoplasm to the plasma membrane. Required for normal cytokinesis during mitosis (By similarity). Required for cortical dynein-dynactin complex recruitment during metaphase (By similarity).</text>
</comment>
<comment type="subunit">
    <text evidence="1 2">Heterotrimeric G proteins are composed of 3 units; alpha, beta and gamma. The alpha chain contains the guanine nucleotide binding site. Part of a spindle orientation complex at least composed of GNAI1, GPSM2 and NUMA1. Identified in complex with the beta subunit GNB1 and the gamma subunit GNG1. Identified in complex with the beta subunit GNB1 and the gamma subunit GNG2. Component of the TAS2R14-GNAI1 complex, consisting of TAS2R14, GNAI1, GNB1 and GNG2; within the complex interacts with TAS2R14; this complex plays a role in the perception of bitterness (By similarity). GTP binding causes dissociation of the heterotrimer, liberating the individual subunits so that they can interact with downstream effector proteins. Interacts (GDP-bound form) with GPSM1; this inhibits guanine nucleotide exchange and GTP binding. Interacts (GDP-bound form) with GPSM2 (via GoLoco domains); this inhibits guanine nucleotide exchange. Interacts with RGS10; this strongly enhances GTP hydrolysis. Interacts with RGS1 and RGS16; this strongly enhances GTPase activity. Interacts with RGS4. Interacts with RGS12. Interacts (via active GTP- or inactive GDP-bound forms) with RGS14 (via RGS and GoLoco domains). Interacts with RGS3, RGS6, RGS7, RGS8, RGS17, RGS18 and RGS20 (in vitro). Interacts (GDP-bound form) with RIC8A (via C-terminus); promoting GNAI1 folding and association with the plasma membrane. Interacts (inactive GDP-bound form) with NUCB1 (via GBA motif); the interaction leads to activation of GNAI1 (By similarity). Interacts (inactive GDP-bound form) with CCDC88C/DAPLE (via GBA motif); the interaction leads to activation of GNAI1 (By similarity). Interacts (inactive GDP-bound form) with CCDC8A/GIV (via GBA motif) (By similarity). Interacts with GPR15 (By similarity).</text>
</comment>
<comment type="subcellular location">
    <subcellularLocation>
        <location evidence="1">Nucleus</location>
    </subcellularLocation>
    <subcellularLocation>
        <location evidence="1">Cytoplasm</location>
    </subcellularLocation>
    <subcellularLocation>
        <location evidence="1">Cell membrane</location>
        <topology evidence="1">Peripheral membrane protein</topology>
        <orientation evidence="1">Cytoplasmic side</orientation>
    </subcellularLocation>
    <subcellularLocation>
        <location evidence="1">Cytoplasm</location>
        <location evidence="1">Cytoskeleton</location>
        <location evidence="1">Microtubule organizing center</location>
        <location evidence="1">Centrosome</location>
    </subcellularLocation>
    <subcellularLocation>
        <location evidence="2">Cytoplasm</location>
        <location evidence="2">Cell cortex</location>
    </subcellularLocation>
    <subcellularLocation>
        <location evidence="1">Membrane</location>
        <topology evidence="1">Lipid-anchor</topology>
    </subcellularLocation>
    <text evidence="1">Localizes in the centrosomes of interphase and mitotic cells, but not in centrosomes during cytokinesis. Detected at the cleavage furrow or the midbody. Localized at the plasma membrane throughout mitosis. Colocalizes with RIC8A and RGS14 at the plasma membrane.</text>
</comment>
<comment type="PTM">
    <text evidence="1">Myristoylation at Gly-2 is required for membrane anchoring before palmitoylation.</text>
</comment>
<comment type="PTM">
    <text evidence="1">Palmitoylation at Cys-3 varies with membrane lipid composition.</text>
</comment>
<comment type="similarity">
    <text evidence="4">Belongs to the G-alpha family. G(i/o/t/z) subfamily.</text>
</comment>
<keyword id="KW-0131">Cell cycle</keyword>
<keyword id="KW-0132">Cell division</keyword>
<keyword id="KW-1003">Cell membrane</keyword>
<keyword id="KW-0963">Cytoplasm</keyword>
<keyword id="KW-0206">Cytoskeleton</keyword>
<keyword id="KW-0342">GTP-binding</keyword>
<keyword id="KW-0378">Hydrolase</keyword>
<keyword id="KW-0449">Lipoprotein</keyword>
<keyword id="KW-0460">Magnesium</keyword>
<keyword id="KW-0472">Membrane</keyword>
<keyword id="KW-0479">Metal-binding</keyword>
<keyword id="KW-0498">Mitosis</keyword>
<keyword id="KW-0519">Myristate</keyword>
<keyword id="KW-0547">Nucleotide-binding</keyword>
<keyword id="KW-0539">Nucleus</keyword>
<keyword id="KW-0564">Palmitate</keyword>
<keyword id="KW-1185">Reference proteome</keyword>
<keyword id="KW-0807">Transducer</keyword>
<keyword id="KW-0813">Transport</keyword>